<comment type="function">
    <text evidence="1">Cyclic nucleotide-regulated potassium channel activated by cAMP.</text>
</comment>
<comment type="subunit">
    <text evidence="1">Homotetramer.</text>
</comment>
<comment type="subcellular location">
    <subcellularLocation>
        <location evidence="1">Cell membrane</location>
        <topology evidence="1">Multi-pass membrane protein</topology>
    </subcellularLocation>
</comment>
<comment type="similarity">
    <text evidence="3">Belongs to the potassium channel family.</text>
</comment>
<protein>
    <recommendedName>
        <fullName>Cyclic nucleotide-gated potassium channel RHE_CH03180</fullName>
    </recommendedName>
</protein>
<keyword id="KW-0114">cAMP</keyword>
<keyword id="KW-0116">cAMP-binding</keyword>
<keyword id="KW-1003">Cell membrane</keyword>
<keyword id="KW-0407">Ion channel</keyword>
<keyword id="KW-0406">Ion transport</keyword>
<keyword id="KW-1071">Ligand-gated ion channel</keyword>
<keyword id="KW-0472">Membrane</keyword>
<keyword id="KW-0547">Nucleotide-binding</keyword>
<keyword id="KW-0630">Potassium</keyword>
<keyword id="KW-0631">Potassium channel</keyword>
<keyword id="KW-0633">Potassium transport</keyword>
<keyword id="KW-1185">Reference proteome</keyword>
<keyword id="KW-0812">Transmembrane</keyword>
<keyword id="KW-1133">Transmembrane helix</keyword>
<keyword id="KW-0813">Transport</keyword>
<proteinExistence type="inferred from homology"/>
<evidence type="ECO:0000250" key="1"/>
<evidence type="ECO:0000250" key="2">
    <source>
        <dbReference type="UniProtKB" id="Q98GN8"/>
    </source>
</evidence>
<evidence type="ECO:0000305" key="3"/>
<reference key="1">
    <citation type="journal article" date="2006" name="Proc. Natl. Acad. Sci. U.S.A.">
        <title>The partitioned Rhizobium etli genome: genetic and metabolic redundancy in seven interacting replicons.</title>
        <authorList>
            <person name="Gonzalez V."/>
            <person name="Santamaria R.I."/>
            <person name="Bustos P."/>
            <person name="Hernandez-Gonzalez I."/>
            <person name="Medrano-Soto A."/>
            <person name="Moreno-Hagelsieb G."/>
            <person name="Janga S.C."/>
            <person name="Ramirez M.A."/>
            <person name="Jimenez-Jacinto V."/>
            <person name="Collado-Vides J."/>
            <person name="Davila G."/>
        </authorList>
    </citation>
    <scope>NUCLEOTIDE SEQUENCE [LARGE SCALE GENOMIC DNA]</scope>
    <source>
        <strain>ATCC 51251 / DSM 11541 / JCM 21823 / NBRC 15573 / CFN 42</strain>
    </source>
</reference>
<sequence>MSAVPFSKISTPLNALFATIGLLVVAALTTQGLTGQERLVFELLLAAIWLAYVLQLSGTLLSRRRRLSGEMTALVIDLLAVLVPAAAFLFVGSRDRDLYCAIWLLKPLRDSTFFRLLAKVVANESRNLLGVTSVFGIVLFGAALAGYIIERDVQPDKFGSIPQAMWWAVVTLSTTGYGDEIPQSLAGRVLAGLVMMSGIGIFALWAGILATGFYEEVRRQDFVRNWQLVAAVPLFQKLGSAALIEIVRALRPRIVPAGAVICRKGEVGDQMFFIVEGRVTVATPDHPVELGAGNFFGEMALISGDPRSATVSAATEVSLLSLYAVDFQILSSSSPEIAETIRKTALERRGGPPKE</sequence>
<accession>Q2K5E1</accession>
<gene>
    <name type="ordered locus">RHE_CH03180</name>
</gene>
<dbReference type="EMBL" id="CP000133">
    <property type="protein sequence ID" value="ABC91945.1"/>
    <property type="molecule type" value="Genomic_DNA"/>
</dbReference>
<dbReference type="RefSeq" id="WP_011426415.1">
    <property type="nucleotide sequence ID" value="NC_007761.1"/>
</dbReference>
<dbReference type="SMR" id="Q2K5E1"/>
<dbReference type="KEGG" id="ret:RHE_CH03180"/>
<dbReference type="eggNOG" id="COG0664">
    <property type="taxonomic scope" value="Bacteria"/>
</dbReference>
<dbReference type="HOGENOM" id="CLU_011722_1_2_5"/>
<dbReference type="OrthoDB" id="9799090at2"/>
<dbReference type="Proteomes" id="UP000001936">
    <property type="component" value="Chromosome"/>
</dbReference>
<dbReference type="GO" id="GO:0005886">
    <property type="term" value="C:plasma membrane"/>
    <property type="evidence" value="ECO:0007669"/>
    <property type="project" value="UniProtKB-SubCell"/>
</dbReference>
<dbReference type="GO" id="GO:0030552">
    <property type="term" value="F:cAMP binding"/>
    <property type="evidence" value="ECO:0007669"/>
    <property type="project" value="UniProtKB-KW"/>
</dbReference>
<dbReference type="GO" id="GO:0005221">
    <property type="term" value="F:intracellularly cyclic nucleotide-activated monoatomic cation channel activity"/>
    <property type="evidence" value="ECO:0007669"/>
    <property type="project" value="InterPro"/>
</dbReference>
<dbReference type="GO" id="GO:0005267">
    <property type="term" value="F:potassium channel activity"/>
    <property type="evidence" value="ECO:0007669"/>
    <property type="project" value="UniProtKB-KW"/>
</dbReference>
<dbReference type="GO" id="GO:0044877">
    <property type="term" value="F:protein-containing complex binding"/>
    <property type="evidence" value="ECO:0007669"/>
    <property type="project" value="TreeGrafter"/>
</dbReference>
<dbReference type="CDD" id="cd00038">
    <property type="entry name" value="CAP_ED"/>
    <property type="match status" value="1"/>
</dbReference>
<dbReference type="FunFam" id="1.10.287.70:FF:000181">
    <property type="entry name" value="Cyclic nucleotide-gated potassium channel mll3241"/>
    <property type="match status" value="1"/>
</dbReference>
<dbReference type="Gene3D" id="1.10.287.70">
    <property type="match status" value="1"/>
</dbReference>
<dbReference type="Gene3D" id="1.20.5.110">
    <property type="match status" value="1"/>
</dbReference>
<dbReference type="Gene3D" id="2.60.120.10">
    <property type="entry name" value="Jelly Rolls"/>
    <property type="match status" value="1"/>
</dbReference>
<dbReference type="Gene3D" id="1.20.120.540">
    <property type="entry name" value="Voltage-gated potassium channels"/>
    <property type="match status" value="1"/>
</dbReference>
<dbReference type="InterPro" id="IPR050866">
    <property type="entry name" value="CNG_cation_channel"/>
</dbReference>
<dbReference type="InterPro" id="IPR018488">
    <property type="entry name" value="cNMP-bd_CS"/>
</dbReference>
<dbReference type="InterPro" id="IPR000595">
    <property type="entry name" value="cNMP-bd_dom"/>
</dbReference>
<dbReference type="InterPro" id="IPR018490">
    <property type="entry name" value="cNMP-bd_dom_sf"/>
</dbReference>
<dbReference type="InterPro" id="IPR013099">
    <property type="entry name" value="K_chnl_dom"/>
</dbReference>
<dbReference type="InterPro" id="IPR027378">
    <property type="entry name" value="Nucleotide_channel_N"/>
</dbReference>
<dbReference type="InterPro" id="IPR014710">
    <property type="entry name" value="RmlC-like_jellyroll"/>
</dbReference>
<dbReference type="PANTHER" id="PTHR45638">
    <property type="entry name" value="CYCLIC NUCLEOTIDE-GATED CATION CHANNEL SUBUNIT A"/>
    <property type="match status" value="1"/>
</dbReference>
<dbReference type="PANTHER" id="PTHR45638:SF11">
    <property type="entry name" value="CYCLIC NUCLEOTIDE-GATED CATION CHANNEL SUBUNIT A"/>
    <property type="match status" value="1"/>
</dbReference>
<dbReference type="Pfam" id="PF00027">
    <property type="entry name" value="cNMP_binding"/>
    <property type="match status" value="1"/>
</dbReference>
<dbReference type="Pfam" id="PF07885">
    <property type="entry name" value="Ion_trans_2"/>
    <property type="match status" value="1"/>
</dbReference>
<dbReference type="PRINTS" id="PR00169">
    <property type="entry name" value="KCHANNEL"/>
</dbReference>
<dbReference type="SMART" id="SM00100">
    <property type="entry name" value="cNMP"/>
    <property type="match status" value="1"/>
</dbReference>
<dbReference type="SUPFAM" id="SSF51206">
    <property type="entry name" value="cAMP-binding domain-like"/>
    <property type="match status" value="1"/>
</dbReference>
<dbReference type="SUPFAM" id="SSF81324">
    <property type="entry name" value="Voltage-gated potassium channels"/>
    <property type="match status" value="1"/>
</dbReference>
<dbReference type="PROSITE" id="PS00888">
    <property type="entry name" value="CNMP_BINDING_1"/>
    <property type="match status" value="1"/>
</dbReference>
<dbReference type="PROSITE" id="PS00889">
    <property type="entry name" value="CNMP_BINDING_2"/>
    <property type="match status" value="1"/>
</dbReference>
<dbReference type="PROSITE" id="PS50042">
    <property type="entry name" value="CNMP_BINDING_3"/>
    <property type="match status" value="1"/>
</dbReference>
<organism>
    <name type="scientific">Rhizobium etli (strain ATCC 51251 / DSM 11541 / JCM 21823 / NBRC 15573 / CFN 42)</name>
    <dbReference type="NCBI Taxonomy" id="347834"/>
    <lineage>
        <taxon>Bacteria</taxon>
        <taxon>Pseudomonadati</taxon>
        <taxon>Pseudomonadota</taxon>
        <taxon>Alphaproteobacteria</taxon>
        <taxon>Hyphomicrobiales</taxon>
        <taxon>Rhizobiaceae</taxon>
        <taxon>Rhizobium/Agrobacterium group</taxon>
        <taxon>Rhizobium</taxon>
    </lineage>
</organism>
<feature type="chain" id="PRO_0000351502" description="Cyclic nucleotide-gated potassium channel RHE_CH03180">
    <location>
        <begin position="1"/>
        <end position="355"/>
    </location>
</feature>
<feature type="topological domain" description="Cytoplasmic" evidence="1">
    <location>
        <begin position="1"/>
        <end position="12"/>
    </location>
</feature>
<feature type="transmembrane region" description="Helical; Name=Segment S1" evidence="1">
    <location>
        <begin position="13"/>
        <end position="30"/>
    </location>
</feature>
<feature type="topological domain" description="Periplasmic" evidence="1">
    <location>
        <begin position="31"/>
        <end position="38"/>
    </location>
</feature>
<feature type="transmembrane region" description="Helical; Name=Segment S2" evidence="1">
    <location>
        <begin position="39"/>
        <end position="61"/>
    </location>
</feature>
<feature type="topological domain" description="Cytoplasmic" evidence="1">
    <location>
        <begin position="62"/>
        <end position="73"/>
    </location>
</feature>
<feature type="transmembrane region" description="Helical; Name=Segment S3" evidence="1">
    <location>
        <begin position="74"/>
        <end position="93"/>
    </location>
</feature>
<feature type="transmembrane region" description="Helical; Name=Segment S4" evidence="1">
    <location>
        <begin position="94"/>
        <end position="111"/>
    </location>
</feature>
<feature type="topological domain" description="Cytoplasmic" evidence="1">
    <location>
        <begin position="112"/>
        <end position="128"/>
    </location>
</feature>
<feature type="transmembrane region" description="Helical; Name=Segment S5" evidence="1">
    <location>
        <begin position="129"/>
        <end position="149"/>
    </location>
</feature>
<feature type="topological domain" description="Periplasmic" evidence="1">
    <location>
        <begin position="150"/>
        <end position="160"/>
    </location>
</feature>
<feature type="intramembrane region" description="Pore-forming" evidence="1">
    <location>
        <begin position="161"/>
        <end position="179"/>
    </location>
</feature>
<feature type="topological domain" description="Periplasmic" evidence="1">
    <location>
        <begin position="180"/>
        <end position="184"/>
    </location>
</feature>
<feature type="transmembrane region" description="Helical; Name=Segment S6" evidence="1">
    <location>
        <begin position="185"/>
        <end position="209"/>
    </location>
</feature>
<feature type="topological domain" description="Cytoplasmic" evidence="1">
    <location>
        <begin position="210"/>
        <end position="355"/>
    </location>
</feature>
<feature type="short sequence motif" description="Selectivity filter" evidence="1">
    <location>
        <begin position="174"/>
        <end position="179"/>
    </location>
</feature>
<feature type="binding site" evidence="2">
    <location>
        <begin position="297"/>
        <end position="298"/>
    </location>
    <ligand>
        <name>3',5'-cyclic AMP</name>
        <dbReference type="ChEBI" id="CHEBI:58165"/>
    </ligand>
</feature>
<feature type="binding site" evidence="2">
    <location>
        <begin position="307"/>
        <end position="308"/>
    </location>
    <ligand>
        <name>3',5'-cyclic AMP</name>
        <dbReference type="ChEBI" id="CHEBI:58165"/>
    </ligand>
</feature>
<feature type="binding site" evidence="2">
    <location>
        <position position="348"/>
    </location>
    <ligand>
        <name>3',5'-cyclic AMP</name>
        <dbReference type="ChEBI" id="CHEBI:58165"/>
    </ligand>
</feature>
<name>CNGK1_RHIEC</name>